<accession>A0A0B5EMG9</accession>
<dbReference type="EMBL" id="KM435073">
    <property type="protein sequence ID" value="AJE75875.1"/>
    <property type="molecule type" value="Genomic_DNA"/>
</dbReference>
<dbReference type="EMBL" id="KM435074">
    <property type="protein sequence ID" value="AJE75876.1"/>
    <property type="molecule type" value="mRNA"/>
</dbReference>
<dbReference type="GlyCosmos" id="A0A0B5EMG9">
    <property type="glycosylation" value="1 site, No reported glycans"/>
</dbReference>
<dbReference type="VEuPathDB" id="FungiDB:FOC1_g10002866"/>
<dbReference type="VEuPathDB" id="FungiDB:FOC4_g10004164"/>
<dbReference type="VEuPathDB" id="FungiDB:FOIG_16462"/>
<dbReference type="VEuPathDB" id="FungiDB:FOMG_16506"/>
<dbReference type="VEuPathDB" id="FungiDB:FOXG_15236"/>
<dbReference type="VEuPathDB" id="FungiDB:FOZG_06207"/>
<dbReference type="VEuPathDB" id="FungiDB:HZS61_009085"/>
<dbReference type="OrthoDB" id="446368at2759"/>
<dbReference type="GO" id="GO:0005886">
    <property type="term" value="C:plasma membrane"/>
    <property type="evidence" value="ECO:0007669"/>
    <property type="project" value="UniProtKB-SubCell"/>
</dbReference>
<dbReference type="GO" id="GO:0022857">
    <property type="term" value="F:transmembrane transporter activity"/>
    <property type="evidence" value="ECO:0007669"/>
    <property type="project" value="InterPro"/>
</dbReference>
<dbReference type="CDD" id="cd17323">
    <property type="entry name" value="MFS_Tpo1_MDR_like"/>
    <property type="match status" value="1"/>
</dbReference>
<dbReference type="FunFam" id="1.20.1250.20:FF:000011">
    <property type="entry name" value="MFS multidrug transporter, putative"/>
    <property type="match status" value="1"/>
</dbReference>
<dbReference type="Gene3D" id="1.20.1250.20">
    <property type="entry name" value="MFS general substrate transporter like domains"/>
    <property type="match status" value="1"/>
</dbReference>
<dbReference type="InterPro" id="IPR011701">
    <property type="entry name" value="MFS"/>
</dbReference>
<dbReference type="InterPro" id="IPR020846">
    <property type="entry name" value="MFS_dom"/>
</dbReference>
<dbReference type="InterPro" id="IPR036259">
    <property type="entry name" value="MFS_trans_sf"/>
</dbReference>
<dbReference type="PANTHER" id="PTHR23502">
    <property type="entry name" value="MAJOR FACILITATOR SUPERFAMILY"/>
    <property type="match status" value="1"/>
</dbReference>
<dbReference type="PANTHER" id="PTHR23502:SF186">
    <property type="entry name" value="MAJOR FACILITATOR SUPERFAMILY (MFS) PROFILE DOMAIN-CONTAINING PROTEIN"/>
    <property type="match status" value="1"/>
</dbReference>
<dbReference type="Pfam" id="PF07690">
    <property type="entry name" value="MFS_1"/>
    <property type="match status" value="1"/>
</dbReference>
<dbReference type="SUPFAM" id="SSF103473">
    <property type="entry name" value="MFS general substrate transporter"/>
    <property type="match status" value="1"/>
</dbReference>
<dbReference type="PROSITE" id="PS50850">
    <property type="entry name" value="MFS"/>
    <property type="match status" value="1"/>
</dbReference>
<feature type="chain" id="PRO_0000437354" description="Efflux pump FUBT">
    <location>
        <begin position="1"/>
        <end position="593"/>
    </location>
</feature>
<feature type="transmembrane region" description="Helical" evidence="1">
    <location>
        <begin position="98"/>
        <end position="118"/>
    </location>
</feature>
<feature type="transmembrane region" description="Helical" evidence="1">
    <location>
        <begin position="135"/>
        <end position="155"/>
    </location>
</feature>
<feature type="transmembrane region" description="Helical" evidence="1">
    <location>
        <begin position="167"/>
        <end position="187"/>
    </location>
</feature>
<feature type="transmembrane region" description="Helical" evidence="1">
    <location>
        <begin position="195"/>
        <end position="215"/>
    </location>
</feature>
<feature type="transmembrane region" description="Helical" evidence="1">
    <location>
        <begin position="227"/>
        <end position="247"/>
    </location>
</feature>
<feature type="transmembrane region" description="Helical" evidence="1">
    <location>
        <begin position="254"/>
        <end position="274"/>
    </location>
</feature>
<feature type="transmembrane region" description="Helical" evidence="1">
    <location>
        <begin position="337"/>
        <end position="357"/>
    </location>
</feature>
<feature type="transmembrane region" description="Helical" evidence="1">
    <location>
        <begin position="367"/>
        <end position="387"/>
    </location>
</feature>
<feature type="transmembrane region" description="Helical" evidence="1">
    <location>
        <begin position="410"/>
        <end position="430"/>
    </location>
</feature>
<feature type="transmembrane region" description="Helical" evidence="1">
    <location>
        <begin position="438"/>
        <end position="458"/>
    </location>
</feature>
<feature type="transmembrane region" description="Helical" evidence="1">
    <location>
        <begin position="468"/>
        <end position="488"/>
    </location>
</feature>
<feature type="transmembrane region" description="Helical" evidence="1">
    <location>
        <begin position="503"/>
        <end position="523"/>
    </location>
</feature>
<feature type="region of interest" description="Disordered" evidence="3">
    <location>
        <begin position="1"/>
        <end position="44"/>
    </location>
</feature>
<feature type="region of interest" description="Disordered" evidence="3">
    <location>
        <begin position="570"/>
        <end position="593"/>
    </location>
</feature>
<feature type="compositionally biased region" description="Polar residues" evidence="3">
    <location>
        <begin position="9"/>
        <end position="30"/>
    </location>
</feature>
<feature type="glycosylation site" description="N-linked (GlcNAc...) asparagine" evidence="2">
    <location>
        <position position="19"/>
    </location>
</feature>
<keyword id="KW-1003">Cell membrane</keyword>
<keyword id="KW-0325">Glycoprotein</keyword>
<keyword id="KW-0472">Membrane</keyword>
<keyword id="KW-0812">Transmembrane</keyword>
<keyword id="KW-1133">Transmembrane helix</keyword>
<keyword id="KW-0813">Transport</keyword>
<reference key="1">
    <citation type="journal article" date="2015" name="Microbiology">
        <title>FUBT, a putative MFS transporter, promotes secretion of fusaric acid in the cotton pathogen Fusarium oxysporum f. sp. vasinfectum.</title>
        <authorList>
            <person name="Crutcher F.K."/>
            <person name="Liu J."/>
            <person name="Puckhaber L.S."/>
            <person name="Stipanovic R.D."/>
            <person name="Bell A.A."/>
            <person name="Nichols R.L."/>
        </authorList>
    </citation>
    <scope>NUCLEOTIDE SEQUENCE [GENOMIC DNA / MRNA]</scope>
    <scope>FUNCTION</scope>
    <scope>DISRUPTION PHENOTYPE</scope>
    <source>
        <strain>AuK24232</strain>
    </source>
</reference>
<reference key="2">
    <citation type="journal article" date="2006" name="Planta">
        <title>Fusaric acid induces apoptosis in saffron root-tip cells: roles of caspase-like activity, cytochrome c, and H2O2.</title>
        <authorList>
            <person name="Samadi L."/>
            <person name="Shahsavan Behboodi B."/>
        </authorList>
    </citation>
    <scope>BIOTECHNOLOGY</scope>
</reference>
<reference key="3">
    <citation type="journal article" date="2008" name="J. Appl. Microbiol.">
        <title>Bikaverin and fusaric acid from Fusarium oxysporum show antioomycete activity against Phytophthora infestans.</title>
        <authorList>
            <person name="Son S.W."/>
            <person name="Kim H.Y."/>
            <person name="Choi G.J."/>
            <person name="Lim H.K."/>
            <person name="Jang K.S."/>
            <person name="Lee S.O."/>
            <person name="Lee S."/>
            <person name="Sung N.D."/>
            <person name="Kim J.C."/>
        </authorList>
    </citation>
    <scope>BIOTECHNOLOGY</scope>
</reference>
<reference key="4">
    <citation type="journal article" date="2011" name="Arch. Pharm. Res.">
        <title>Antimycobacterial activity of fusaric acid from a mangrove endophyte and its metal complexes.</title>
        <authorList>
            <person name="Pan J.H."/>
            <person name="Chen Y."/>
            <person name="Huang Y.H."/>
            <person name="Tao Y.W."/>
            <person name="Wang J."/>
            <person name="Li Y."/>
            <person name="Peng Y."/>
            <person name="Dong T."/>
            <person name="Lai X.M."/>
            <person name="Lin Y.C."/>
        </authorList>
    </citation>
    <scope>BIOTECHNOLOGY</scope>
</reference>
<reference key="5">
    <citation type="journal article" date="2011" name="Toxicon">
        <title>Phytotoxicity of fusaric acid and analogs to cotton.</title>
        <authorList>
            <person name="Stipanovic R.D."/>
            <person name="Puckhaber L.S."/>
            <person name="Liu J."/>
            <person name="Bell A.A."/>
        </authorList>
    </citation>
    <scope>BIOTECHNOLOGY</scope>
</reference>
<reference key="6">
    <citation type="journal article" date="2012" name="Planta Med.">
        <title>In vitro acanthamoebicidal activity of fusaric acid and dehydrofusaric acid from an endophytic fungus Fusarium sp. Tlau3.</title>
        <authorList>
            <person name="Boonman N."/>
            <person name="Prachya S."/>
            <person name="Boonmee A."/>
            <person name="Kittakoop P."/>
            <person name="Wiyakrutta S."/>
            <person name="Sriubolmas N."/>
            <person name="Warit S."/>
            <person name="Dharmkrong-At Chusattayanond A."/>
        </authorList>
    </citation>
    <scope>BIOTECHNOLOGY</scope>
</reference>
<reference key="7">
    <citation type="journal article" date="2013" name="Planta">
        <title>Fusaric acid induction of programmed cell death modulated through nitric oxide signalling in tobacco suspension cells.</title>
        <authorList>
            <person name="Jiao J."/>
            <person name="Zhou B."/>
            <person name="Zhu X."/>
            <person name="Gao Z."/>
            <person name="Liang Y."/>
        </authorList>
    </citation>
    <scope>BIOTECHNOLOGY</scope>
</reference>
<reference key="8">
    <citation type="journal article" date="2013" name="PLoS ONE">
        <title>Contamination of bananas with beauvericin and fusaric acid produced by Fusarium oxysporum f. sp. cubense.</title>
        <authorList>
            <person name="Li C."/>
            <person name="Zuo C."/>
            <person name="Deng G."/>
            <person name="Kuang R."/>
            <person name="Yang Q."/>
            <person name="Hu C."/>
            <person name="Sheng O."/>
            <person name="Zhang S."/>
            <person name="Ma L."/>
            <person name="Wei Y."/>
            <person name="Yang J."/>
            <person name="Liu S."/>
            <person name="Biswas M.K."/>
            <person name="Viljoen A."/>
            <person name="Yi G."/>
        </authorList>
    </citation>
    <scope>BIOTECHNOLOGY</scope>
</reference>
<sequence>MAIDPQPSSPSLSSETIANDTIGNDNNVNEPSVEPKTQENQHTVPPRLSRIYSQAHHISQSFIDQNYPGEGTTQAPYRINFLPDDTQNAQLLPRWKKWAFVLLQSLACLATTFASSAYSGGIKQVIRAFGISQEVATLGISLYVLGFTFGPLIWAPLSELYGRKKVFFFTFMVATAFSAGAAGAGSIASLLVLRFLTGSIGSAPLSNAPALIADMFDKSERGLAMCMFSGAPFLGPAIGPIAGGFLGEAAGWRWLHGLMAAFTGVTWIACTVFIPETYAPYILRKRAQHMSKLTGKVYISTLDADKPPSSAAHQLKNALTRPWLLLFKEPIVFITSIYISIIYGTMYMCFAAFPIVFQKGRGWSQGIGGLAFTGIVIGVVLSIISFAFEDKRYARAAQRRGAPMEPEDRLPPAIMGSLLIPIGLFWFAWTTFPSVHWIVPIIGTVFFAWGLVLVFMALLNYLIDSYVIFAASIMAANSALRSLFGAAFPLFTRQMYDGLGVQWASSIPAFLALACVPFPFLFYKYGRQIRMKCEYAAEAANVLQKMRSLHVTVTEDDAMNEAEEMWRARTHNSHASAAHSHGHRRSLSYTRSV</sequence>
<proteinExistence type="evidence at protein level"/>
<organism>
    <name type="scientific">Fusarium oxysporum</name>
    <name type="common">Fusarium vascular wilt</name>
    <dbReference type="NCBI Taxonomy" id="5507"/>
    <lineage>
        <taxon>Eukaryota</taxon>
        <taxon>Fungi</taxon>
        <taxon>Dikarya</taxon>
        <taxon>Ascomycota</taxon>
        <taxon>Pezizomycotina</taxon>
        <taxon>Sordariomycetes</taxon>
        <taxon>Hypocreomycetidae</taxon>
        <taxon>Hypocreales</taxon>
        <taxon>Nectriaceae</taxon>
        <taxon>Fusarium</taxon>
        <taxon>Fusarium oxysporum species complex</taxon>
    </lineage>
</organism>
<protein>
    <recommendedName>
        <fullName evidence="13">Efflux pump FUBT</fullName>
    </recommendedName>
    <alternativeName>
        <fullName evidence="12">Fusaric acid biosynthesis protein T</fullName>
    </alternativeName>
    <alternativeName>
        <fullName evidence="12">Fusaric acid transporter</fullName>
    </alternativeName>
</protein>
<gene>
    <name evidence="12" type="primary">FUBT</name>
</gene>
<name>FUB11_FUSOX</name>
<evidence type="ECO:0000255" key="1"/>
<evidence type="ECO:0000255" key="2">
    <source>
        <dbReference type="PROSITE-ProRule" id="PRU00498"/>
    </source>
</evidence>
<evidence type="ECO:0000256" key="3">
    <source>
        <dbReference type="SAM" id="MobiDB-lite"/>
    </source>
</evidence>
<evidence type="ECO:0000269" key="4">
    <source>
    </source>
</evidence>
<evidence type="ECO:0000269" key="5">
    <source>
    </source>
</evidence>
<evidence type="ECO:0000269" key="6">
    <source>
    </source>
</evidence>
<evidence type="ECO:0000269" key="7">
    <source>
    </source>
</evidence>
<evidence type="ECO:0000269" key="8">
    <source>
    </source>
</evidence>
<evidence type="ECO:0000269" key="9">
    <source>
    </source>
</evidence>
<evidence type="ECO:0000269" key="10">
    <source>
    </source>
</evidence>
<evidence type="ECO:0000269" key="11">
    <source>
    </source>
</evidence>
<evidence type="ECO:0000303" key="12">
    <source>
    </source>
</evidence>
<evidence type="ECO:0000305" key="13"/>
<evidence type="ECO:0000305" key="14">
    <source>
    </source>
</evidence>
<comment type="function">
    <text evidence="11">Efflux pump involved in export of fusaric acid, a mycotoxin with low to moderate toxicity to animals and humans, but with high phytotoxic properties (PubMed:25627440). Constitutes a self-protecting mechanism of the fungus against critical levels of FSA within the cell (PubMed:25627440).</text>
</comment>
<comment type="subcellular location">
    <subcellularLocation>
        <location evidence="14">Cell membrane</location>
        <topology evidence="1">Multi-pass membrane protein</topology>
    </subcellularLocation>
</comment>
<comment type="disruption phenotype">
    <text evidence="11">Blocks the secretion of fusaric acid and results in decreased resistance to fusaric acid (PubMed:25627440).</text>
</comment>
<comment type="biotechnology">
    <text evidence="4 5 6 7 8 9 10">Fusaric acid is phytotoxic to plants such as cotton and banana (PubMed:20955724, PubMed:23922960). It has been shown to induce programmed cell death in plants (PubMed:16868776, PubMed:23838885). In addition to a mild toxicity to animals, fusaric acid exhibits acanthamoebicidal, antioomycete, and antimycobacterial activities (PubMed:17927749, PubMed:21811925, PubMed:22864988).</text>
</comment>
<comment type="similarity">
    <text evidence="13">Belongs to the major facilitator superfamily. DHA1 family. Polyamines/proton antiporter (TC 2.A.1.2.16) subfamily.</text>
</comment>